<gene>
    <name evidence="10" type="primary">Ufl1</name>
    <name evidence="7" type="synonym">Maxer</name>
    <name evidence="6" type="synonym">Rcad</name>
</gene>
<name>UFL1_RAT</name>
<dbReference type="EC" id="2.3.2.-" evidence="1"/>
<dbReference type="EMBL" id="BC166498">
    <property type="protein sequence ID" value="AAI66498.1"/>
    <property type="molecule type" value="mRNA"/>
</dbReference>
<dbReference type="RefSeq" id="NP_001119751.1">
    <property type="nucleotide sequence ID" value="NM_001126279.1"/>
</dbReference>
<dbReference type="SMR" id="B2GV24"/>
<dbReference type="FunCoup" id="B2GV24">
    <property type="interactions" value="4225"/>
</dbReference>
<dbReference type="IntAct" id="B2GV24">
    <property type="interactions" value="2"/>
</dbReference>
<dbReference type="MINT" id="B2GV24"/>
<dbReference type="STRING" id="10116.ENSRNOP00000010421"/>
<dbReference type="GlyGen" id="B2GV24">
    <property type="glycosylation" value="1 site"/>
</dbReference>
<dbReference type="iPTMnet" id="B2GV24"/>
<dbReference type="PhosphoSitePlus" id="B2GV24"/>
<dbReference type="jPOST" id="B2GV24"/>
<dbReference type="PaxDb" id="10116-ENSRNOP00000010421"/>
<dbReference type="PeptideAtlas" id="B2GV24"/>
<dbReference type="Ensembl" id="ENSRNOT00000010421.6">
    <property type="protein sequence ID" value="ENSRNOP00000010421.5"/>
    <property type="gene ID" value="ENSRNOG00000007831.8"/>
</dbReference>
<dbReference type="GeneID" id="313115"/>
<dbReference type="KEGG" id="rno:313115"/>
<dbReference type="UCSC" id="RGD:1309308">
    <property type="organism name" value="rat"/>
</dbReference>
<dbReference type="AGR" id="RGD:1309308"/>
<dbReference type="CTD" id="23376"/>
<dbReference type="RGD" id="1309308">
    <property type="gene designation" value="Ufl1"/>
</dbReference>
<dbReference type="eggNOG" id="KOG2235">
    <property type="taxonomic scope" value="Eukaryota"/>
</dbReference>
<dbReference type="GeneTree" id="ENSGT00390000002112"/>
<dbReference type="HOGENOM" id="CLU_012417_1_0_1"/>
<dbReference type="InParanoid" id="B2GV24"/>
<dbReference type="OMA" id="CILHASG"/>
<dbReference type="OrthoDB" id="54627at9989"/>
<dbReference type="PhylomeDB" id="B2GV24"/>
<dbReference type="TreeFam" id="TF319116"/>
<dbReference type="Reactome" id="R-RNO-983168">
    <property type="pathway name" value="Antigen processing: Ubiquitination &amp; Proteasome degradation"/>
</dbReference>
<dbReference type="PRO" id="PR:B2GV24"/>
<dbReference type="Proteomes" id="UP000002494">
    <property type="component" value="Chromosome 5"/>
</dbReference>
<dbReference type="Bgee" id="ENSRNOG00000007831">
    <property type="expression patterns" value="Expressed in pancreas and 20 other cell types or tissues"/>
</dbReference>
<dbReference type="ExpressionAtlas" id="B2GV24">
    <property type="expression patterns" value="baseline and differential"/>
</dbReference>
<dbReference type="GO" id="GO:0005737">
    <property type="term" value="C:cytoplasm"/>
    <property type="evidence" value="ECO:0000250"/>
    <property type="project" value="UniProtKB"/>
</dbReference>
<dbReference type="GO" id="GO:0005829">
    <property type="term" value="C:cytosol"/>
    <property type="evidence" value="ECO:0007669"/>
    <property type="project" value="UniProtKB-SubCell"/>
</dbReference>
<dbReference type="GO" id="GO:0005783">
    <property type="term" value="C:endoplasmic reticulum"/>
    <property type="evidence" value="ECO:0000250"/>
    <property type="project" value="UniProtKB"/>
</dbReference>
<dbReference type="GO" id="GO:0005789">
    <property type="term" value="C:endoplasmic reticulum membrane"/>
    <property type="evidence" value="ECO:0000250"/>
    <property type="project" value="UniProtKB"/>
</dbReference>
<dbReference type="GO" id="GO:0005741">
    <property type="term" value="C:mitochondrial outer membrane"/>
    <property type="evidence" value="ECO:0000266"/>
    <property type="project" value="RGD"/>
</dbReference>
<dbReference type="GO" id="GO:0043005">
    <property type="term" value="C:neuron projection"/>
    <property type="evidence" value="ECO:0000266"/>
    <property type="project" value="RGD"/>
</dbReference>
<dbReference type="GO" id="GO:0005634">
    <property type="term" value="C:nucleus"/>
    <property type="evidence" value="ECO:0000250"/>
    <property type="project" value="UniProtKB"/>
</dbReference>
<dbReference type="GO" id="GO:0032991">
    <property type="term" value="C:protein-containing complex"/>
    <property type="evidence" value="ECO:0000266"/>
    <property type="project" value="RGD"/>
</dbReference>
<dbReference type="GO" id="GO:0035861">
    <property type="term" value="C:site of double-strand break"/>
    <property type="evidence" value="ECO:0000250"/>
    <property type="project" value="UniProtKB"/>
</dbReference>
<dbReference type="GO" id="GO:0019901">
    <property type="term" value="F:protein kinase binding"/>
    <property type="evidence" value="ECO:0000266"/>
    <property type="project" value="RGD"/>
</dbReference>
<dbReference type="GO" id="GO:0061666">
    <property type="term" value="F:UFM1 ligase activity"/>
    <property type="evidence" value="ECO:0000250"/>
    <property type="project" value="UniProtKB"/>
</dbReference>
<dbReference type="GO" id="GO:0071568">
    <property type="term" value="F:UFM1 transferase activity"/>
    <property type="evidence" value="ECO:0000318"/>
    <property type="project" value="GO_Central"/>
</dbReference>
<dbReference type="GO" id="GO:0000077">
    <property type="term" value="P:DNA damage checkpoint signaling"/>
    <property type="evidence" value="ECO:0000250"/>
    <property type="project" value="UniProtKB"/>
</dbReference>
<dbReference type="GO" id="GO:0006974">
    <property type="term" value="P:DNA damage response"/>
    <property type="evidence" value="ECO:0000250"/>
    <property type="project" value="UniProtKB"/>
</dbReference>
<dbReference type="GO" id="GO:0006281">
    <property type="term" value="P:DNA repair"/>
    <property type="evidence" value="ECO:0007669"/>
    <property type="project" value="UniProtKB-KW"/>
</dbReference>
<dbReference type="GO" id="GO:0030218">
    <property type="term" value="P:erythrocyte differentiation"/>
    <property type="evidence" value="ECO:0000250"/>
    <property type="project" value="UniProtKB"/>
</dbReference>
<dbReference type="GO" id="GO:0060218">
    <property type="term" value="P:hematopoietic stem cell differentiation"/>
    <property type="evidence" value="ECO:0000250"/>
    <property type="project" value="UniProtKB"/>
</dbReference>
<dbReference type="GO" id="GO:0043066">
    <property type="term" value="P:negative regulation of apoptotic process"/>
    <property type="evidence" value="ECO:0000315"/>
    <property type="project" value="ParkinsonsUK-UCL"/>
</dbReference>
<dbReference type="GO" id="GO:1903895">
    <property type="term" value="P:negative regulation of IRE1-mediated unfolded protein response"/>
    <property type="evidence" value="ECO:0000250"/>
    <property type="project" value="UniProtKB"/>
</dbReference>
<dbReference type="GO" id="GO:0032088">
    <property type="term" value="P:negative regulation of NF-kappaB transcription factor activity"/>
    <property type="evidence" value="ECO:0000250"/>
    <property type="project" value="UniProtKB"/>
</dbReference>
<dbReference type="GO" id="GO:0031397">
    <property type="term" value="P:negative regulation of protein ubiquitination"/>
    <property type="evidence" value="ECO:0000250"/>
    <property type="project" value="UniProtKB"/>
</dbReference>
<dbReference type="GO" id="GO:0050868">
    <property type="term" value="P:negative regulation of T cell activation"/>
    <property type="evidence" value="ECO:0000250"/>
    <property type="project" value="UniProtKB"/>
</dbReference>
<dbReference type="GO" id="GO:0002841">
    <property type="term" value="P:negative regulation of T cell mediated immune response to tumor cell"/>
    <property type="evidence" value="ECO:0000250"/>
    <property type="project" value="UniProtKB"/>
</dbReference>
<dbReference type="GO" id="GO:0010508">
    <property type="term" value="P:positive regulation of autophagy"/>
    <property type="evidence" value="ECO:0000250"/>
    <property type="project" value="UniProtKB"/>
</dbReference>
<dbReference type="GO" id="GO:0008284">
    <property type="term" value="P:positive regulation of cell population proliferation"/>
    <property type="evidence" value="ECO:0000266"/>
    <property type="project" value="RGD"/>
</dbReference>
<dbReference type="GO" id="GO:0060252">
    <property type="term" value="P:positive regulation of glial cell proliferation"/>
    <property type="evidence" value="ECO:0000266"/>
    <property type="project" value="RGD"/>
</dbReference>
<dbReference type="GO" id="GO:1903052">
    <property type="term" value="P:positive regulation of proteolysis involved in protein catabolic process"/>
    <property type="evidence" value="ECO:0000266"/>
    <property type="project" value="RGD"/>
</dbReference>
<dbReference type="GO" id="GO:0140501">
    <property type="term" value="P:positive regulation of reticulophagy"/>
    <property type="evidence" value="ECO:0000250"/>
    <property type="project" value="UniProtKB"/>
</dbReference>
<dbReference type="GO" id="GO:1990592">
    <property type="term" value="P:protein K69-linked ufmylation"/>
    <property type="evidence" value="ECO:0000250"/>
    <property type="project" value="UniProtKB"/>
</dbReference>
<dbReference type="GO" id="GO:0050821">
    <property type="term" value="P:protein stabilization"/>
    <property type="evidence" value="ECO:0000266"/>
    <property type="project" value="RGD"/>
</dbReference>
<dbReference type="GO" id="GO:0071569">
    <property type="term" value="P:protein ufmylation"/>
    <property type="evidence" value="ECO:0000250"/>
    <property type="project" value="UniProtKB"/>
</dbReference>
<dbReference type="GO" id="GO:0043122">
    <property type="term" value="P:regulation of canonical NF-kappaB signal transduction"/>
    <property type="evidence" value="ECO:0000250"/>
    <property type="project" value="UniProtKB"/>
</dbReference>
<dbReference type="GO" id="GO:0010468">
    <property type="term" value="P:regulation of gene expression"/>
    <property type="evidence" value="ECO:0000266"/>
    <property type="project" value="RGD"/>
</dbReference>
<dbReference type="GO" id="GO:0050727">
    <property type="term" value="P:regulation of inflammatory response"/>
    <property type="evidence" value="ECO:0000250"/>
    <property type="project" value="UniProtKB"/>
</dbReference>
<dbReference type="GO" id="GO:0033146">
    <property type="term" value="P:regulation of intracellular estrogen receptor signaling pathway"/>
    <property type="evidence" value="ECO:0000250"/>
    <property type="project" value="UniProtKB"/>
</dbReference>
<dbReference type="GO" id="GO:0032434">
    <property type="term" value="P:regulation of proteasomal ubiquitin-dependent protein catabolic process"/>
    <property type="evidence" value="ECO:0000266"/>
    <property type="project" value="RGD"/>
</dbReference>
<dbReference type="GO" id="GO:0032880">
    <property type="term" value="P:regulation of protein localization"/>
    <property type="evidence" value="ECO:0000266"/>
    <property type="project" value="RGD"/>
</dbReference>
<dbReference type="GO" id="GO:0072344">
    <property type="term" value="P:rescue of stalled ribosome"/>
    <property type="evidence" value="ECO:0000250"/>
    <property type="project" value="UniProtKB"/>
</dbReference>
<dbReference type="GO" id="GO:0034976">
    <property type="term" value="P:response to endoplasmic reticulum stress"/>
    <property type="evidence" value="ECO:0000250"/>
    <property type="project" value="UniProtKB"/>
</dbReference>
<dbReference type="GO" id="GO:1902065">
    <property type="term" value="P:response to L-glutamate"/>
    <property type="evidence" value="ECO:0000266"/>
    <property type="project" value="RGD"/>
</dbReference>
<dbReference type="GO" id="GO:0061709">
    <property type="term" value="P:reticulophagy"/>
    <property type="evidence" value="ECO:0000250"/>
    <property type="project" value="UniProtKB"/>
</dbReference>
<dbReference type="GO" id="GO:0032790">
    <property type="term" value="P:ribosome disassembly"/>
    <property type="evidence" value="ECO:0000250"/>
    <property type="project" value="UniProtKB"/>
</dbReference>
<dbReference type="InterPro" id="IPR018611">
    <property type="entry name" value="Ufl1"/>
</dbReference>
<dbReference type="InterPro" id="IPR056761">
    <property type="entry name" value="Ufl1-like_C"/>
</dbReference>
<dbReference type="InterPro" id="IPR056580">
    <property type="entry name" value="Ufl1_dom"/>
</dbReference>
<dbReference type="InterPro" id="IPR056579">
    <property type="entry name" value="Ufl1_N"/>
</dbReference>
<dbReference type="PANTHER" id="PTHR31057">
    <property type="entry name" value="E3 UFM1-PROTEIN LIGASE 1"/>
    <property type="match status" value="1"/>
</dbReference>
<dbReference type="PANTHER" id="PTHR31057:SF0">
    <property type="entry name" value="E3 UFM1-PROTEIN LIGASE 1"/>
    <property type="match status" value="1"/>
</dbReference>
<dbReference type="Pfam" id="PF09743">
    <property type="entry name" value="E3_UFM1_ligase"/>
    <property type="match status" value="1"/>
</dbReference>
<dbReference type="Pfam" id="PF23659">
    <property type="entry name" value="UFL1"/>
    <property type="match status" value="1"/>
</dbReference>
<dbReference type="Pfam" id="PF25041">
    <property type="entry name" value="UFL1_C"/>
    <property type="match status" value="1"/>
</dbReference>
<protein>
    <recommendedName>
        <fullName evidence="8">E3 UFM1-protein ligase 1</fullName>
        <ecNumber evidence="1">2.3.2.-</ecNumber>
    </recommendedName>
    <alternativeName>
        <fullName evidence="8">E3 UFM1-protein transferase 1</fullName>
    </alternativeName>
    <alternativeName>
        <fullName evidence="7">Multiple alpha-helix protein located at ER</fullName>
    </alternativeName>
    <alternativeName>
        <fullName evidence="6">Regulator of C53/LZAP and DDRGK1</fullName>
    </alternativeName>
</protein>
<comment type="function">
    <text evidence="1 2">E3 protein ligase that mediates ufmylation, the covalent attachment of the ubiquitin-like modifier UFM1 to lysine residues on target proteins, and which plays a key role in various processes, such as ribosome recycling, response to DNA damage, interferon response or reticulophagy (also called ER-phagy) (By similarity). Catalyzes ufmylation of many protein, such as CD274/PD-L1, CDK5RAP3, CYB5R3, DDRGK1, EIF6, histone H4, MRE11, P4HB, PDCD1/PD-1, TRIP4, RPN1, RPS20/uS10, RPL10/uL16, RPL26/uL24, SYVN1/HRD1 and TP53/p53 (By similarity). As part of the UREL complex, plays a key role in ribosome recycling by catalyzing mono-ufmylation of RPL26/uL24 subunit of the 60S ribosome (By similarity). Ufmylation of RPL26/uL24 occurs on free 60S ribosomes following ribosome dissociation: it weakens the junction between post-termination 60S subunits and SEC61 translocons, promoting release and recycling of the large ribosomal subunit from the endoplasmic reticulum membrane (By similarity). Ufmylation of RPL26/uL24 and subsequent 60S ribosome recycling either take place after normal termination of translation or after ribosome stalling during cotranslational translocation at the endoplasmic reticulum (By similarity). Involved in reticulophagy in response to endoplasmic reticulum stress by mediating ufmylation of proteins such as CYB5R3 and RPN1, thereby promoting lysosomal degradation of ufmylated proteins (By similarity). Ufmylation in response to endoplasmic reticulum stress is essential for processes such as hematopoiesis, blood vessel morphogenesis or inflammatory response (By similarity). Mediates ufmylation of DDRGK1 and CDK5RAP3; the role of these modifications is however unclear: as both DDRGK1 and CDK5RAP3 act as substrate adapters for ufmylation, it is uncertain whether ufmylation of these proteins is, a collateral effect or is required for ufmylation (By similarity). Acts as a negative regulator of T-cell activation by mediating ufmylation and stabilization of PDCD1/PD-1 (By similarity). Also involved in the response to DNA damage: recruited to double-strand break sites following DNA damage and mediates monoufmylation of histone H4 and ufmylation of MRE11 (By similarity). Mediates ufmylation of TP53/p53, promoting its stability (By similarity). Catalyzes ufmylation of TRIP4, thereby playing a role in nuclear receptor-mediated transcription (By similarity). Required for hematopoietic stem cell function and hematopoiesis (By similarity).</text>
</comment>
<comment type="subunit">
    <text evidence="1 5">Catalytic component of the UFM1 ribosome E3 ligase (UREL) complex, composed of UFL1, DDRGK1 and CDK5RAP3 (PubMed:20531390). Interacts with E2-like enzyme UFC1 (By similarity). Interacts with RELA (By similarity). Interacts with NBN; promoting recruitment to double-strand breaks following DNA damage (By similarity). Interacts (when phosphorylated) with YWHAG/14-3-3-gamma; sequestering UFL1 and preventing its association with PDCD1/PD-1 substrate (By similarity).</text>
</comment>
<comment type="subcellular location">
    <subcellularLocation>
        <location evidence="9">Endoplasmic reticulum membrane</location>
    </subcellularLocation>
    <subcellularLocation>
        <location evidence="1">Cytoplasm</location>
        <location evidence="1">Cytosol</location>
    </subcellularLocation>
    <subcellularLocation>
        <location evidence="1">Nucleus</location>
    </subcellularLocation>
    <subcellularLocation>
        <location evidence="1">Chromosome</location>
    </subcellularLocation>
    <text evidence="1">Recruited to double-strand breaks by the MRE11-RAD50-NBN (MRN) complex following DNA damage.</text>
</comment>
<comment type="tissue specificity">
    <text evidence="4 5">Ubiquitously expressed with expression detected in brain, skeletal muscle, lung, heart, gall bladder, liver, small intestine, pancreas, spleen and kidney (at protein level) (PubMed:20228063). At 8 weeks after birth, high expression in the Purkinje cell layer of the cerebellum (PubMed:20531390).</text>
</comment>
<comment type="PTM">
    <text evidence="1">Ubiquitinated, leading to its degradation by the proteasome. Interaction with CDK5RAP3 protects both proteins against ubiquitination and degradation via the proteasome.</text>
</comment>
<comment type="PTM">
    <text evidence="1">Phosphorylated at Ser-462 by ATM, enhancing protein ligase activity and promoting ATM activation in a positive feedback loop. Phosphorylation at Thr-535 by AMPK promotes its interaction with YWHAG/14-3-3-gamma, thereby preventing UFL1 association with PDCD1/PD-1 substrate.</text>
</comment>
<comment type="similarity">
    <text evidence="8">Belongs to the UFL1 family.</text>
</comment>
<evidence type="ECO:0000250" key="1">
    <source>
        <dbReference type="UniProtKB" id="O94874"/>
    </source>
</evidence>
<evidence type="ECO:0000250" key="2">
    <source>
        <dbReference type="UniProtKB" id="Q8CCJ3"/>
    </source>
</evidence>
<evidence type="ECO:0000256" key="3">
    <source>
        <dbReference type="SAM" id="MobiDB-lite"/>
    </source>
</evidence>
<evidence type="ECO:0000269" key="4">
    <source>
    </source>
</evidence>
<evidence type="ECO:0000269" key="5">
    <source>
    </source>
</evidence>
<evidence type="ECO:0000303" key="6">
    <source>
    </source>
</evidence>
<evidence type="ECO:0000303" key="7">
    <source>
    </source>
</evidence>
<evidence type="ECO:0000305" key="8"/>
<evidence type="ECO:0000305" key="9">
    <source>
    </source>
</evidence>
<evidence type="ECO:0000312" key="10">
    <source>
        <dbReference type="RGD" id="1309308"/>
    </source>
</evidence>
<evidence type="ECO:0007744" key="11">
    <source>
    </source>
</evidence>
<keyword id="KW-0007">Acetylation</keyword>
<keyword id="KW-0158">Chromosome</keyword>
<keyword id="KW-0963">Cytoplasm</keyword>
<keyword id="KW-0227">DNA damage</keyword>
<keyword id="KW-0234">DNA repair</keyword>
<keyword id="KW-0256">Endoplasmic reticulum</keyword>
<keyword id="KW-0472">Membrane</keyword>
<keyword id="KW-0488">Methylation</keyword>
<keyword id="KW-0539">Nucleus</keyword>
<keyword id="KW-0597">Phosphoprotein</keyword>
<keyword id="KW-1185">Reference proteome</keyword>
<keyword id="KW-0808">Transferase</keyword>
<keyword id="KW-0832">Ubl conjugation</keyword>
<keyword id="KW-0833">Ubl conjugation pathway</keyword>
<sequence length="793" mass="89585">MADAWEEIRRLAADFQRAQFAESTQRLSERNCIEIVNKLISQKQLEVVHTLDGKEYITPAQISKEMRDELHVRGGRVNIVDLQQVINVDLTHIENRVGDIIKSEKHVQMVLGQLVDENYLDRLSEEVNDKLQESGQVTVSELCKTYDLPGDFLTQALTQRLGRIINGHLDLDNRGVIFTEAFVARHKARIRGLFSAITRPTAVNSLVSKYGFQEQLLYSVLEELVSTGRLRGTVVGGRQDKAVFVPDIYSRTQSTWVDSFFRQNGYLEFDALSRLGIPDAVNYIKKRYKNTPLLFLKATCVGQGLVDQVEASVEEAISSGTWVDVSPLLPSSLSVEDAAMLLQQVMRPFGKHASATVFSDTVVVSEKFINDCTKLFSERMHQKAEKEMKNNPVHLITEEDLKQISILESVNTNKKDKKDERRKKATEGSGSVRGGGGGNAREYKIKKVKKKGRKDEDSDDESQSSHAGKKKPDITFMFQDEIEGCLRKHIPDAPEEFISELAEHLIKPLNKMYLEVVRSVFMSSTSASGTGRKRTIKDLQEEVSNLYNNIRLFEKGMKYFADDTQTALTKHLLKTVCTDITNLMFNFLASDLMMAVEDPATITSDMRKKILSKLTEETKVALTKLHNSLNEKSIEDFLSCLDSATEACDIMVKKGDKKRERQILFQHRQALADQLKVTEDPALILHLTSVLLFQFSTHSMLHAPGRCVPQIIAFLHNKIPEDQHTLLVKYQGLVVKQLVSQNKKSGQGEDPSSDDLDKEQHDVTNTTRKELQELSLSIKDLVLKPRKSSVTEE</sequence>
<accession>B2GV24</accession>
<reference key="1">
    <citation type="journal article" date="2004" name="Genome Res.">
        <title>The status, quality, and expansion of the NIH full-length cDNA project: the Mammalian Gene Collection (MGC).</title>
        <authorList>
            <consortium name="The MGC Project Team"/>
        </authorList>
    </citation>
    <scope>NUCLEOTIDE SEQUENCE [LARGE SCALE MRNA]</scope>
    <source>
        <tissue>Testis</tissue>
    </source>
</reference>
<reference key="2">
    <citation type="journal article" date="2010" name="EMBO J.">
        <title>Suppression of the novel ER protein Maxer by mutant ataxin-1 in Bergman glia contributes to non-cell-autonomous toxicity.</title>
        <authorList>
            <person name="Shiwaku H."/>
            <person name="Yoshimura N."/>
            <person name="Tamura T."/>
            <person name="Sone M."/>
            <person name="Ogishima S."/>
            <person name="Watase K."/>
            <person name="Tagawa K."/>
            <person name="Okazawa H."/>
        </authorList>
    </citation>
    <scope>INTERACTION WITH CDK5RAP3</scope>
    <scope>SUBCELLULAR LOCATION</scope>
    <scope>TISSUE SPECIFICITY</scope>
</reference>
<reference key="3">
    <citation type="journal article" date="2010" name="J. Biol. Chem.">
        <title>A novel C53/LZAP-interacting protein regulates stability of C53/LZAP and DDRGK domain-containing Protein 1 (DDRGK1) and modulates NF-kappaB signaling.</title>
        <authorList>
            <person name="Wu J."/>
            <person name="Lei G."/>
            <person name="Mei M."/>
            <person name="Tang Y."/>
            <person name="Li H."/>
        </authorList>
    </citation>
    <scope>TISSUE SPECIFICITY</scope>
</reference>
<reference key="4">
    <citation type="journal article" date="2012" name="Nat. Commun.">
        <title>Quantitative maps of protein phosphorylation sites across 14 different rat organs and tissues.</title>
        <authorList>
            <person name="Lundby A."/>
            <person name="Secher A."/>
            <person name="Lage K."/>
            <person name="Nordsborg N.B."/>
            <person name="Dmytriyev A."/>
            <person name="Lundby C."/>
            <person name="Olsen J.V."/>
        </authorList>
    </citation>
    <scope>PHOSPHORYLATION [LARGE SCALE ANALYSIS] AT SER-458</scope>
    <scope>IDENTIFICATION BY MASS SPECTROMETRY [LARGE SCALE ANALYSIS]</scope>
</reference>
<organism>
    <name type="scientific">Rattus norvegicus</name>
    <name type="common">Rat</name>
    <dbReference type="NCBI Taxonomy" id="10116"/>
    <lineage>
        <taxon>Eukaryota</taxon>
        <taxon>Metazoa</taxon>
        <taxon>Chordata</taxon>
        <taxon>Craniata</taxon>
        <taxon>Vertebrata</taxon>
        <taxon>Euteleostomi</taxon>
        <taxon>Mammalia</taxon>
        <taxon>Eutheria</taxon>
        <taxon>Euarchontoglires</taxon>
        <taxon>Glires</taxon>
        <taxon>Rodentia</taxon>
        <taxon>Myomorpha</taxon>
        <taxon>Muroidea</taxon>
        <taxon>Muridae</taxon>
        <taxon>Murinae</taxon>
        <taxon>Rattus</taxon>
    </lineage>
</organism>
<feature type="initiator methionine" description="Removed" evidence="1">
    <location>
        <position position="1"/>
    </location>
</feature>
<feature type="chain" id="PRO_0000391875" description="E3 UFM1-protein ligase 1">
    <location>
        <begin position="2"/>
        <end position="793"/>
    </location>
</feature>
<feature type="region of interest" description="Required for E3 UFM1-protein ligase activity" evidence="1">
    <location>
        <begin position="2"/>
        <end position="212"/>
    </location>
</feature>
<feature type="region of interest" description="Mediates interaction with DDRGK1" evidence="1">
    <location>
        <begin position="2"/>
        <end position="200"/>
    </location>
</feature>
<feature type="region of interest" description="Involved in CDK5RAP3-binding" evidence="1">
    <location>
        <begin position="121"/>
        <end position="250"/>
    </location>
</feature>
<feature type="region of interest" description="Mediates interaction with TRIP4" evidence="1">
    <location>
        <begin position="200"/>
        <end position="400"/>
    </location>
</feature>
<feature type="region of interest" description="Disordered" evidence="3">
    <location>
        <begin position="410"/>
        <end position="473"/>
    </location>
</feature>
<feature type="region of interest" description="Mediates interaction with CDK5RAP3" evidence="5">
    <location>
        <begin position="490"/>
        <end position="683"/>
    </location>
</feature>
<feature type="region of interest" description="Disordered" evidence="3">
    <location>
        <begin position="742"/>
        <end position="769"/>
    </location>
</feature>
<feature type="compositionally biased region" description="Basic and acidic residues" evidence="3">
    <location>
        <begin position="758"/>
        <end position="769"/>
    </location>
</feature>
<feature type="modified residue" description="N-acetylalanine" evidence="1">
    <location>
        <position position="2"/>
    </location>
</feature>
<feature type="modified residue" description="Omega-N-methylarginine" evidence="2">
    <location>
        <position position="433"/>
    </location>
</feature>
<feature type="modified residue" description="Phosphoserine" evidence="11">
    <location>
        <position position="458"/>
    </location>
</feature>
<feature type="modified residue" description="Phosphoserine" evidence="1">
    <location>
        <position position="462"/>
    </location>
</feature>
<feature type="modified residue" description="Phosphothreonine" evidence="1">
    <location>
        <position position="535"/>
    </location>
</feature>
<feature type="modified residue" description="Phosphoserine" evidence="2">
    <location>
        <position position="752"/>
    </location>
</feature>
<feature type="modified residue" description="Phosphoserine" evidence="2">
    <location>
        <position position="753"/>
    </location>
</feature>
<proteinExistence type="evidence at protein level"/>